<sequence length="296" mass="33209">MSAANPETPNSTISREANTQSSSAATSQGYVLPEGKIMPNTVFVGGIDVRMDETEIRGFFARYGSVKEVKIITDRTGVSKGYGFVSFFNDVDVQKIVESQINFHGKKLKLGPAIRKQNLCAYHVQPRPLVFNHPPPPQFQNVWSNPNTETYMHPPTTMNPVTQYVQAYPPYPNSPVQVITGYQLPVYNYQMPPQWPVGEQRSYVVPPAYSSVNYYCNEIDPGAEVVPNECSVCEATPPSGNGPQKKSVDRSIQTVVSCLFNPENSRLRNSVVTQDDYFRDKRVHHFRRSRAVLKSV</sequence>
<evidence type="ECO:0000250" key="1"/>
<evidence type="ECO:0000250" key="2">
    <source>
        <dbReference type="UniProtKB" id="Q64368"/>
    </source>
</evidence>
<evidence type="ECO:0000255" key="3">
    <source>
        <dbReference type="PROSITE-ProRule" id="PRU00176"/>
    </source>
</evidence>
<evidence type="ECO:0000255" key="4">
    <source>
        <dbReference type="PROSITE-ProRule" id="PRU01238"/>
    </source>
</evidence>
<evidence type="ECO:0000256" key="5">
    <source>
        <dbReference type="SAM" id="MobiDB-lite"/>
    </source>
</evidence>
<evidence type="ECO:0000269" key="6">
    <source>
    </source>
</evidence>
<dbReference type="EMBL" id="AF144131">
    <property type="protein sequence ID" value="AAG50425.1"/>
    <property type="molecule type" value="mRNA"/>
</dbReference>
<dbReference type="RefSeq" id="NP_001171972.1">
    <property type="nucleotide sequence ID" value="NM_001185043.1"/>
</dbReference>
<dbReference type="SMR" id="Q9BGN8"/>
<dbReference type="FunCoup" id="Q9BGN8">
    <property type="interactions" value="80"/>
</dbReference>
<dbReference type="STRING" id="9483.ENSCJAP00000006526"/>
<dbReference type="Ensembl" id="ENSCJAT00000072147.3">
    <property type="protein sequence ID" value="ENSCJAP00000056614.1"/>
    <property type="gene ID" value="ENSCJAG00000039120.3"/>
</dbReference>
<dbReference type="GeneID" id="100410648"/>
<dbReference type="KEGG" id="cjc:100410648"/>
<dbReference type="CTD" id="1618"/>
<dbReference type="GeneTree" id="ENSGT00530000063480"/>
<dbReference type="InParanoid" id="Q9BGN8"/>
<dbReference type="OrthoDB" id="762982at2759"/>
<dbReference type="Proteomes" id="UP000008225">
    <property type="component" value="Chromosome 17"/>
</dbReference>
<dbReference type="Bgee" id="ENSCJAG00000039120">
    <property type="expression patterns" value="Expressed in testis and 1 other cell type or tissue"/>
</dbReference>
<dbReference type="GO" id="GO:0005737">
    <property type="term" value="C:cytoplasm"/>
    <property type="evidence" value="ECO:0007669"/>
    <property type="project" value="UniProtKB-SubCell"/>
</dbReference>
<dbReference type="GO" id="GO:0005634">
    <property type="term" value="C:nucleus"/>
    <property type="evidence" value="ECO:0007669"/>
    <property type="project" value="UniProtKB-SubCell"/>
</dbReference>
<dbReference type="GO" id="GO:0003730">
    <property type="term" value="F:mRNA 3'-UTR binding"/>
    <property type="evidence" value="ECO:0007669"/>
    <property type="project" value="InterPro"/>
</dbReference>
<dbReference type="GO" id="GO:0008494">
    <property type="term" value="F:translation activator activity"/>
    <property type="evidence" value="ECO:0007669"/>
    <property type="project" value="TreeGrafter"/>
</dbReference>
<dbReference type="GO" id="GO:0070935">
    <property type="term" value="P:3'-UTR-mediated mRNA stabilization"/>
    <property type="evidence" value="ECO:0007669"/>
    <property type="project" value="TreeGrafter"/>
</dbReference>
<dbReference type="GO" id="GO:0030154">
    <property type="term" value="P:cell differentiation"/>
    <property type="evidence" value="ECO:0007669"/>
    <property type="project" value="UniProtKB-KW"/>
</dbReference>
<dbReference type="GO" id="GO:0045948">
    <property type="term" value="P:positive regulation of translational initiation"/>
    <property type="evidence" value="ECO:0007669"/>
    <property type="project" value="TreeGrafter"/>
</dbReference>
<dbReference type="GO" id="GO:0007283">
    <property type="term" value="P:spermatogenesis"/>
    <property type="evidence" value="ECO:0007669"/>
    <property type="project" value="UniProtKB-KW"/>
</dbReference>
<dbReference type="CDD" id="cd12672">
    <property type="entry name" value="RRM_DAZL"/>
    <property type="match status" value="1"/>
</dbReference>
<dbReference type="FunFam" id="3.30.70.330:FF:000180">
    <property type="entry name" value="Deleted in azoospermia-like"/>
    <property type="match status" value="1"/>
</dbReference>
<dbReference type="Gene3D" id="3.30.70.330">
    <property type="match status" value="1"/>
</dbReference>
<dbReference type="InterPro" id="IPR043628">
    <property type="entry name" value="DAZ_dom"/>
</dbReference>
<dbReference type="InterPro" id="IPR037551">
    <property type="entry name" value="DAZ_RRM_vert"/>
</dbReference>
<dbReference type="InterPro" id="IPR012677">
    <property type="entry name" value="Nucleotide-bd_a/b_plait_sf"/>
</dbReference>
<dbReference type="InterPro" id="IPR035979">
    <property type="entry name" value="RBD_domain_sf"/>
</dbReference>
<dbReference type="InterPro" id="IPR000504">
    <property type="entry name" value="RRM_dom"/>
</dbReference>
<dbReference type="PANTHER" id="PTHR11176">
    <property type="entry name" value="BOULE-RELATED"/>
    <property type="match status" value="1"/>
</dbReference>
<dbReference type="PANTHER" id="PTHR11176:SF8">
    <property type="entry name" value="DELETED IN AZOOSPERMIA PROTEIN 1-RELATED"/>
    <property type="match status" value="1"/>
</dbReference>
<dbReference type="Pfam" id="PF18872">
    <property type="entry name" value="Daz"/>
    <property type="match status" value="1"/>
</dbReference>
<dbReference type="Pfam" id="PF00076">
    <property type="entry name" value="RRM_1"/>
    <property type="match status" value="1"/>
</dbReference>
<dbReference type="SMART" id="SM00360">
    <property type="entry name" value="RRM"/>
    <property type="match status" value="1"/>
</dbReference>
<dbReference type="SUPFAM" id="SSF54928">
    <property type="entry name" value="RNA-binding domain, RBD"/>
    <property type="match status" value="1"/>
</dbReference>
<dbReference type="PROSITE" id="PS51890">
    <property type="entry name" value="DAZ"/>
    <property type="match status" value="1"/>
</dbReference>
<dbReference type="PROSITE" id="PS50102">
    <property type="entry name" value="RRM"/>
    <property type="match status" value="1"/>
</dbReference>
<accession>Q9BGN8</accession>
<organism>
    <name type="scientific">Callithrix jacchus</name>
    <name type="common">White-tufted-ear marmoset</name>
    <dbReference type="NCBI Taxonomy" id="9483"/>
    <lineage>
        <taxon>Eukaryota</taxon>
        <taxon>Metazoa</taxon>
        <taxon>Chordata</taxon>
        <taxon>Craniata</taxon>
        <taxon>Vertebrata</taxon>
        <taxon>Euteleostomi</taxon>
        <taxon>Mammalia</taxon>
        <taxon>Eutheria</taxon>
        <taxon>Euarchontoglires</taxon>
        <taxon>Primates</taxon>
        <taxon>Haplorrhini</taxon>
        <taxon>Platyrrhini</taxon>
        <taxon>Cebidae</taxon>
        <taxon>Callitrichinae</taxon>
        <taxon>Callithrix</taxon>
        <taxon>Callithrix</taxon>
    </lineage>
</organism>
<protein>
    <recommendedName>
        <fullName>Deleted in azoospermia-like</fullName>
    </recommendedName>
    <alternativeName>
        <fullName>DAZ-like autosomal</fullName>
    </alternativeName>
    <alternativeName>
        <fullName>Deleted in azoospermia-like 1</fullName>
    </alternativeName>
</protein>
<reference key="1">
    <citation type="submission" date="1999-04" db="EMBL/GenBank/DDBJ databases">
        <title>Evolution of the germ line locus DAZL1 (Deleted in AZoospermia-Like 1) is different in Platyrrhini and Catarrhini.</title>
        <authorList>
            <person name="Grossmann B."/>
            <person name="Saunders P.T.K."/>
            <person name="Edelmann A."/>
            <person name="Roos C.H."/>
            <person name="Weinbauer G."/>
            <person name="Vogt P.H."/>
        </authorList>
    </citation>
    <scope>NUCLEOTIDE SEQUENCE [MRNA]</scope>
    <source>
        <tissue>Testis</tissue>
    </source>
</reference>
<reference key="2">
    <citation type="journal article" date="2000" name="J. Androl.">
        <title>Dynamic subcellular distribution of the DAZL protein is confined to primate male germ cells.</title>
        <authorList>
            <person name="Ruggiu M."/>
            <person name="Saunders P.T.K."/>
            <person name="Cooke H.J."/>
        </authorList>
    </citation>
    <scope>SUBCELLULAR LOCATION</scope>
</reference>
<gene>
    <name type="primary">DAZL</name>
    <name type="synonym">DAZL1</name>
    <name type="synonym">DAZLA</name>
</gene>
<comment type="function">
    <text evidence="1">RNA-binding protein, which is essential for gametogenesis in both males and females. Plays a central role during spermatogenesis. Acts by binding to the 3'-UTR of mRNA, specifically recognizing GUU triplets, and thereby regulating the translation of key transcripts (By similarity).</text>
</comment>
<comment type="subunit">
    <text evidence="1">Homodimer and heterodimer. Forms a heterodimer with DAZ. Interacts with BOLL, DAZAP1 and DAZAP2. Interacts with PUM2 Multiple DAZL RRMs can bind to a single RNA containing multiple GUU triplets (By similarity).</text>
</comment>
<comment type="subcellular location">
    <subcellularLocation>
        <location evidence="6">Cytoplasm</location>
    </subcellularLocation>
    <subcellularLocation>
        <location evidence="6">Nucleus</location>
    </subcellularLocation>
    <text>Predominantly cytoplasmic. Nuclear in spermatogonia until near the end of the meiotic prophase and cytoplasmic localization from then onward.</text>
</comment>
<comment type="tissue specificity">
    <text>Testis specific.</text>
</comment>
<comment type="domain">
    <text evidence="1">The DAZ domain mediates the interaction with DAZAP1 and DAZAP2.</text>
</comment>
<comment type="similarity">
    <text evidence="4">Belongs to the RRM DAZ family.</text>
</comment>
<name>DAZL_CALJA</name>
<proteinExistence type="evidence at transcript level"/>
<feature type="chain" id="PRO_0000081558" description="Deleted in azoospermia-like">
    <location>
        <begin position="1"/>
        <end position="296"/>
    </location>
</feature>
<feature type="domain" description="RRM" evidence="3">
    <location>
        <begin position="40"/>
        <end position="115"/>
    </location>
</feature>
<feature type="domain" description="DAZ" evidence="4">
    <location>
        <begin position="167"/>
        <end position="190"/>
    </location>
</feature>
<feature type="region of interest" description="Disordered" evidence="5">
    <location>
        <begin position="1"/>
        <end position="25"/>
    </location>
</feature>
<feature type="region of interest" description="Homodimerization" evidence="1">
    <location>
        <begin position="80"/>
        <end position="132"/>
    </location>
</feature>
<feature type="compositionally biased region" description="Polar residues" evidence="5">
    <location>
        <begin position="1"/>
        <end position="18"/>
    </location>
</feature>
<feature type="modified residue" description="Phosphotyrosine" evidence="2">
    <location>
        <position position="277"/>
    </location>
</feature>
<keyword id="KW-0963">Cytoplasm</keyword>
<keyword id="KW-0217">Developmental protein</keyword>
<keyword id="KW-0221">Differentiation</keyword>
<keyword id="KW-0539">Nucleus</keyword>
<keyword id="KW-0597">Phosphoprotein</keyword>
<keyword id="KW-1185">Reference proteome</keyword>
<keyword id="KW-0694">RNA-binding</keyword>
<keyword id="KW-0744">Spermatogenesis</keyword>
<keyword id="KW-0810">Translation regulation</keyword>